<sequence>MGNAPSNSSEDEAAAAGGEGWSPHQDWAADSGTTPGPGPAAAVLPSAAALLEPARLREAAAALRPAPPCESLVSRHHGALLRWLEERLGRGEESVTLEQFRELLEARGAGCSGEQFEEAFAQFDAEGDGTVDAENMLEALKNSSGANLQGELSHVIRQLQACSLVPGFIDIFSESKEGLGIHSSMILRFLHRNRISSMVIPYPMLDHCNNMCTMRSSVLKESLDQLVQKEKESPGDLARSPEMDKLKSVTKCYAYIETSSNPADIYRMTNGETSSYWQSDGSARSHWIRLKMKPDVVLRHLSIAVAATDQSYMPQQVTVAVGRSASDLQEVRDVHIPSNVTGYVTLLENANISQLYVQINIKRCLSDGCDTRIHGLRAVGFQRVKKSGVSVSDASAIWYWSLLTSLVTASMETNPAFVQTVLHNTQKALQHMPPLSLSPGSTDFSTFLSPNVLEEVDSFLIRITSCCSTPEVELTLLAFALARGSIAKVMSSLCTITDHLDTQYDASSLISSMASVRQNLLLKYGKPLQLTLQACDVKGKEDKSGPENLLVEPWTRDGFLTETGKTRASTIFSTGSDSAFQVTQIRIMVRRGGIGAQCGLVFAYNSPSNKFHAEEHFKRFEKYDKWKLQELRQFVKSRIGCSSDDLGEDDPIGWFELEEEWDEADVKLQQCRVAKFLMVKFLCTRQESAERLGVQGLSISGYLRPARAEAEQSILYAHCRRDTENIHGATLLLRTLQFIQQLSHDLMQQKESGLKHKSFLDFAGLDLQIFWKFYSKLKQNRREECICAQTLLLKLLQSCFSVLQGDPQAASEEEKPTAQRSEGIQAAKELYTHLCNVVDKPNGNSMPMEILKQEVRNTLLNGAAIFFPDRQTRRSQLFTMMKSVTEHERKQSLQLTFHSLCTYFSDKDPGGLLLLPEKSDLATMNTSEVLAVMNTLLSVAARECELLMLNRSHGAVGSVLFSLFWSVQGSLLSWCFLQLKSTDAAAKELAMDLIEKYVGQFLASMRVILESLLSQYSGKTIVEKLCNSVFSMAARQLVIFLLDFCTLDVSHCTLLREFSTLTELLKKLCSDPEGGLSKLDVETWQQEQPVVLHTWTKESTHNYENNCHEVSVFISPGATYFEVEFDERCETEKRYDYLEFTDSRGGKTRYDTKVGTYKWPKKVTFKDGPRLQFLFHSDSSNNEWGYKFTVTAYGLPDVAVSWGLDLQLLVSRLMGRLASQCMALKSVHQLGSNMAVSQAKLTSVLNSPLWKPVFRHQICPELELEASWPTHPHKDGKEVKNIPDDPCRHFLLDFAQSEPAQNFCGPYSELFKGFIQACRKQAPKTDIVAGSTIDQAVNATFAALVYRTPDLYEKLQKYVNSGGKIALTEEFSQVYSLADGIRIWMLEMKQKSLLSLGNDSEEKRGLEAAEVNPESLAKECIQKSLLLLKFLPMSKSSKENCDKLETVDETDHLQPLDRRQRTSSVVEEHFQGSASPTEAATPAAGDRSPALEIQPKLLPSSGPCVAEVSTAEEPSPPSTPTRRPPFTRGRLRLLSFRSMEETRPVPTVKEKYPVLKDVMDFIKDQSLSHESVVKVLSLRKAQGQSILEVLRIIQYCTESLGQPHCFHPPYILFLLELLTCQKDFTNYFGHLEGCGADLHREIRDTYYQLVLFLVKAIKRFSSINDRSLLPALSCVQTALLHLLDMGWEPSDLAFFVDIQLPDLLMNMSQENISVHDSVISQWSEEDELADAKQNSEWMDECQDGMFEAWYEKIAQEDPEKQRKMHMFIARYCDLLNVDISCDGCDEIAPWHRYRCLQCSDMDLCKTCFLGGVKPEGHGDDHEMVNMEFTCDHCQGLIIGRRMNCNVCDDFDLCYGCYTAKKYSYGHLPTHSITAHPMVTIRISDRQRLIQPYIHNYSWLLFAALALYSAHLTSTEQVDGEQLDPQARTNAATLRSQCMQLVGDCLMKAHQGKGLKALALLGVLPDGDSTSENQALPVTVSFQASEEQADAGLLVPCNGKRAADTEVRPLDYKQKKKAGEDLSIVKDPSCQTQVSDAPASAHVPPGLPDAEHPEVSAQVLVEEKAITPNPEQVFAECSQKRILGLLAAMLPPIKSGPTVPLIDLEHVLPLMFQVVISNAGHLNETYHLTLGLLGQLIIRLQPAEVDAAVMKVLSAKHNLRVGLDWACSMAEILRSLNNAPLWRDVIATFTDHCIKQLPFQLKHTNIFTLLVLVGFPQVLCVGTRCVYMDNANEPHNVIILKHFTEKNRAVIVDVKTRKRKTVKDYQLVQKGGGQECGTSQSQLSQYSQHFAFIASHLLQTSMDSHCPEAVEATWVLSLALKGLYKTLKAHGFEETHATFLQTDLLKLLVKKCSKGTGFSKTWLLRDLEILSIMLYSSKKEINTLAEHGDLELDERGDQEEELDRPVSSPGEAEQKKLDPLENLDEPTRICFLMAHDALNAPLHILRAIYELQMKKTDSFFLEVQKRFDGDELTTDERIRSLAQRWQPSRSLRLEEQSAKAVDTDMIILPCLSRPARSDQATPESNPVTQKLISSTESELQQSYAKQRRSKSAALLHKELNCKSKRAIRDYLFRVNEATSVLYARHVLASLLAEWPGHVPVSEDILELSGPAHMTYILDMFMQLEEKHQWEKILQKVLQGCRENMLGTMALAACQFMEEPGMEVQVRESKHSYNNNTSFEDKVHIPGAIYLSIKFDPQRNTEEGCDELAMSSSSDFQQDRHNFSGSQQKWKDFELPGDTLYYRFTSDMSNTEWGYRFTVTAGHLGRFQTGFEILKQMLSEERVVPHLALGKIWEWLVGVACRQTGHQRLKAIHLLLRIVQCCSHSDLCDLGLLKPLWQLFTHMEYGLFEDVTQPGILLPLHRALTELFFVTENRAQELGLLQEYLLALTTEDHLLRCAAQALQNIAAISLAINYPNKATRLWNVEC</sequence>
<proteinExistence type="evidence at protein level"/>
<evidence type="ECO:0000250" key="1">
    <source>
        <dbReference type="UniProtKB" id="O43149"/>
    </source>
</evidence>
<evidence type="ECO:0000255" key="2">
    <source>
        <dbReference type="PROSITE-ProRule" id="PRU00228"/>
    </source>
</evidence>
<evidence type="ECO:0000255" key="3">
    <source>
        <dbReference type="PROSITE-ProRule" id="PRU00448"/>
    </source>
</evidence>
<evidence type="ECO:0000255" key="4">
    <source>
        <dbReference type="PROSITE-ProRule" id="PRU00614"/>
    </source>
</evidence>
<evidence type="ECO:0000256" key="5">
    <source>
        <dbReference type="SAM" id="MobiDB-lite"/>
    </source>
</evidence>
<evidence type="ECO:0000303" key="6">
    <source>
    </source>
</evidence>
<evidence type="ECO:0000305" key="7"/>
<evidence type="ECO:0007744" key="8">
    <source>
    </source>
</evidence>
<evidence type="ECO:0007744" key="9">
    <source>
    </source>
</evidence>
<organism>
    <name type="scientific">Mus musculus</name>
    <name type="common">Mouse</name>
    <dbReference type="NCBI Taxonomy" id="10090"/>
    <lineage>
        <taxon>Eukaryota</taxon>
        <taxon>Metazoa</taxon>
        <taxon>Chordata</taxon>
        <taxon>Craniata</taxon>
        <taxon>Vertebrata</taxon>
        <taxon>Euteleostomi</taxon>
        <taxon>Mammalia</taxon>
        <taxon>Eutheria</taxon>
        <taxon>Euarchontoglires</taxon>
        <taxon>Glires</taxon>
        <taxon>Rodentia</taxon>
        <taxon>Myomorpha</taxon>
        <taxon>Muroidea</taxon>
        <taxon>Muridae</taxon>
        <taxon>Murinae</taxon>
        <taxon>Mus</taxon>
        <taxon>Mus</taxon>
    </lineage>
</organism>
<gene>
    <name type="primary">Zzef1</name>
    <name type="synonym">Kiaa0399</name>
</gene>
<name>ZZEF1_MOUSE</name>
<comment type="function">
    <text evidence="1">Histone H3 reader which may act as a transcriptional coactivator for KLF6 and KLF9 transcription factors.</text>
</comment>
<comment type="subunit">
    <text evidence="1">Interacts with KLF6 and KLF9 (By similarity). Interacts via (ZZ-type 2 zinc finger) with histone H3 trimethylated at 'Lys-4' (H3K4me3) and histone H3 acetylated at 'Lys-4' (H3K4ac) (By similarity).</text>
</comment>
<comment type="alternative products">
    <event type="alternative splicing"/>
    <isoform>
        <id>Q5SSH7-1</id>
        <name>1</name>
        <sequence type="displayed"/>
    </isoform>
    <isoform>
        <id>Q5SSH7-2</id>
        <name>2</name>
        <sequence type="described" ref="VSP_025876"/>
    </isoform>
    <isoform>
        <id>Q5SSH7-3</id>
        <name>3</name>
        <sequence type="described" ref="VSP_025877"/>
    </isoform>
</comment>
<comment type="sequence caution" evidence="7">
    <conflict type="erroneous initiation">
        <sequence resource="EMBL-CDS" id="AAH37463"/>
    </conflict>
</comment>
<comment type="sequence caution" evidence="7">
    <conflict type="erroneous initiation">
        <sequence resource="EMBL-CDS" id="AAH99976"/>
    </conflict>
</comment>
<comment type="sequence caution" evidence="7">
    <conflict type="erroneous initiation">
        <sequence resource="EMBL-CDS" id="BAC97941"/>
    </conflict>
</comment>
<feature type="initiator methionine" description="Removed" evidence="1">
    <location>
        <position position="1"/>
    </location>
</feature>
<feature type="chain" id="PRO_0000289001" description="Zinc finger ZZ-type and EF-hand domain-containing protein 1">
    <location>
        <begin position="2"/>
        <end position="2924"/>
    </location>
</feature>
<feature type="domain" description="EF-hand" evidence="3">
    <location>
        <begin position="111"/>
        <end position="146"/>
    </location>
</feature>
<feature type="domain" description="DOC" evidence="4">
    <location>
        <begin position="226"/>
        <end position="405"/>
    </location>
</feature>
<feature type="zinc finger region" description="ZZ-type 1" evidence="2">
    <location>
        <begin position="1776"/>
        <end position="1831"/>
    </location>
</feature>
<feature type="zinc finger region" description="ZZ-type 2" evidence="2">
    <location>
        <begin position="1825"/>
        <end position="1880"/>
    </location>
</feature>
<feature type="region of interest" description="Disordered" evidence="5">
    <location>
        <begin position="1"/>
        <end position="41"/>
    </location>
</feature>
<feature type="region of interest" description="Disordered" evidence="5">
    <location>
        <begin position="1452"/>
        <end position="1527"/>
    </location>
</feature>
<feature type="region of interest" description="Disordered" evidence="5">
    <location>
        <begin position="2388"/>
        <end position="2418"/>
    </location>
</feature>
<feature type="compositionally biased region" description="Low complexity" evidence="5">
    <location>
        <begin position="28"/>
        <end position="41"/>
    </location>
</feature>
<feature type="compositionally biased region" description="Basic and acidic residues" evidence="5">
    <location>
        <begin position="1452"/>
        <end position="1470"/>
    </location>
</feature>
<feature type="compositionally biased region" description="Low complexity" evidence="5">
    <location>
        <begin position="1472"/>
        <end position="1485"/>
    </location>
</feature>
<feature type="compositionally biased region" description="Pro residues" evidence="5">
    <location>
        <begin position="1514"/>
        <end position="1523"/>
    </location>
</feature>
<feature type="binding site" evidence="2">
    <location>
        <position position="1781"/>
    </location>
    <ligand>
        <name>Zn(2+)</name>
        <dbReference type="ChEBI" id="CHEBI:29105"/>
        <label>1</label>
    </ligand>
</feature>
<feature type="binding site" evidence="2">
    <location>
        <position position="1784"/>
    </location>
    <ligand>
        <name>Zn(2+)</name>
        <dbReference type="ChEBI" id="CHEBI:29105"/>
        <label>1</label>
    </ligand>
</feature>
<feature type="binding site" evidence="2">
    <location>
        <position position="1795"/>
    </location>
    <ligand>
        <name>Zn(2+)</name>
        <dbReference type="ChEBI" id="CHEBI:29105"/>
        <label>2</label>
    </ligand>
</feature>
<feature type="binding site" evidence="2">
    <location>
        <position position="1798"/>
    </location>
    <ligand>
        <name>Zn(2+)</name>
        <dbReference type="ChEBI" id="CHEBI:29105"/>
        <label>2</label>
    </ligand>
</feature>
<feature type="binding site" evidence="2">
    <location>
        <position position="1804"/>
    </location>
    <ligand>
        <name>Zn(2+)</name>
        <dbReference type="ChEBI" id="CHEBI:29105"/>
        <label>1</label>
    </ligand>
</feature>
<feature type="binding site" evidence="2">
    <location>
        <position position="1807"/>
    </location>
    <ligand>
        <name>Zn(2+)</name>
        <dbReference type="ChEBI" id="CHEBI:29105"/>
        <label>1</label>
    </ligand>
</feature>
<feature type="binding site" evidence="2">
    <location>
        <position position="1817"/>
    </location>
    <ligand>
        <name>Zn(2+)</name>
        <dbReference type="ChEBI" id="CHEBI:29105"/>
        <label>2</label>
    </ligand>
</feature>
<feature type="binding site" evidence="2">
    <location>
        <position position="1821"/>
    </location>
    <ligand>
        <name>Zn(2+)</name>
        <dbReference type="ChEBI" id="CHEBI:29105"/>
        <label>2</label>
    </ligand>
</feature>
<feature type="binding site" evidence="2">
    <location>
        <position position="1830"/>
    </location>
    <ligand>
        <name>Zn(2+)</name>
        <dbReference type="ChEBI" id="CHEBI:29105"/>
        <label>3</label>
    </ligand>
</feature>
<feature type="binding site" evidence="2">
    <location>
        <position position="1833"/>
    </location>
    <ligand>
        <name>Zn(2+)</name>
        <dbReference type="ChEBI" id="CHEBI:29105"/>
        <label>3</label>
    </ligand>
</feature>
<feature type="binding site" evidence="2">
    <location>
        <position position="1844"/>
    </location>
    <ligand>
        <name>Zn(2+)</name>
        <dbReference type="ChEBI" id="CHEBI:29105"/>
        <label>4</label>
    </ligand>
</feature>
<feature type="binding site" evidence="2">
    <location>
        <position position="1847"/>
    </location>
    <ligand>
        <name>Zn(2+)</name>
        <dbReference type="ChEBI" id="CHEBI:29105"/>
        <label>4</label>
    </ligand>
</feature>
<feature type="binding site" evidence="2">
    <location>
        <position position="1853"/>
    </location>
    <ligand>
        <name>Zn(2+)</name>
        <dbReference type="ChEBI" id="CHEBI:29105"/>
        <label>3</label>
    </ligand>
</feature>
<feature type="binding site" evidence="2">
    <location>
        <position position="1856"/>
    </location>
    <ligand>
        <name>Zn(2+)</name>
        <dbReference type="ChEBI" id="CHEBI:29105"/>
        <label>3</label>
    </ligand>
</feature>
<feature type="binding site" evidence="2">
    <location>
        <position position="1866"/>
    </location>
    <ligand>
        <name>Zn(2+)</name>
        <dbReference type="ChEBI" id="CHEBI:29105"/>
        <label>4</label>
    </ligand>
</feature>
<feature type="binding site" evidence="2">
    <location>
        <position position="1870"/>
    </location>
    <ligand>
        <name>Zn(2+)</name>
        <dbReference type="ChEBI" id="CHEBI:29105"/>
        <label>4</label>
    </ligand>
</feature>
<feature type="modified residue" description="Phosphoserine" evidence="1">
    <location>
        <position position="240"/>
    </location>
</feature>
<feature type="modified residue" description="Phosphoserine" evidence="1">
    <location>
        <position position="1475"/>
    </location>
</feature>
<feature type="modified residue" description="Phosphoserine" evidence="9">
    <location>
        <position position="1488"/>
    </location>
</feature>
<feature type="modified residue" description="Phosphoserine" evidence="1">
    <location>
        <position position="1509"/>
    </location>
</feature>
<feature type="modified residue" description="Phosphothreonine" evidence="1">
    <location>
        <position position="1510"/>
    </location>
</feature>
<feature type="modified residue" description="Phosphoserine" evidence="9">
    <location>
        <position position="1515"/>
    </location>
</feature>
<feature type="modified residue" description="Phosphothreonine" evidence="9">
    <location>
        <position position="1519"/>
    </location>
</feature>
<feature type="modified residue" description="Phosphothreonine" evidence="1">
    <location>
        <position position="1521"/>
    </location>
</feature>
<feature type="modified residue" description="Phosphoserine" evidence="1">
    <location>
        <position position="1535"/>
    </location>
</feature>
<feature type="modified residue" description="Phosphoserine" evidence="8">
    <location>
        <position position="1538"/>
    </location>
</feature>
<feature type="modified residue" description="Phosphoserine" evidence="9">
    <location>
        <position position="2407"/>
    </location>
</feature>
<feature type="modified residue" description="N6-acetyllysine" evidence="1">
    <location>
        <position position="2630"/>
    </location>
</feature>
<feature type="lipid moiety-binding region" description="N-myristoyl glycine" evidence="1">
    <location>
        <position position="2"/>
    </location>
</feature>
<feature type="splice variant" id="VSP_025877" description="In isoform 3." evidence="6">
    <location>
        <begin position="1"/>
        <end position="2840"/>
    </location>
</feature>
<feature type="splice variant" id="VSP_025876" description="In isoform 2." evidence="7">
    <original>VRESKHSYNNNTSFEDKVHIPGAIYLSIKFDPQR</original>
    <variation>C</variation>
    <location>
        <begin position="2664"/>
        <end position="2697"/>
    </location>
</feature>
<feature type="sequence conflict" description="In Ref. 4; BAC35122." evidence="7" ref="4">
    <original>S</original>
    <variation>P</variation>
    <location>
        <position position="2670"/>
    </location>
</feature>
<feature type="sequence conflict" description="In Ref. 4; BAC35122." evidence="7" ref="4">
    <original>R</original>
    <variation>C</variation>
    <location>
        <position position="2697"/>
    </location>
</feature>
<protein>
    <recommendedName>
        <fullName>Zinc finger ZZ-type and EF-hand domain-containing protein 1</fullName>
    </recommendedName>
</protein>
<reference key="1">
    <citation type="journal article" date="2003" name="DNA Res.">
        <title>Prediction of the coding sequences of mouse homologues of KIAA gene: III. The complete nucleotide sequences of 500 mouse KIAA-homologous cDNAs identified by screening of terminal sequences of cDNA clones randomly sampled from size-fractionated libraries.</title>
        <authorList>
            <person name="Okazaki N."/>
            <person name="Kikuno R."/>
            <person name="Ohara R."/>
            <person name="Inamoto S."/>
            <person name="Koseki H."/>
            <person name="Hiraoka S."/>
            <person name="Saga Y."/>
            <person name="Nagase T."/>
            <person name="Ohara O."/>
            <person name="Koga H."/>
        </authorList>
    </citation>
    <scope>NUCLEOTIDE SEQUENCE [LARGE SCALE MRNA] (ISOFORM 3)</scope>
    <source>
        <tissue>Embryonic tail</tissue>
    </source>
</reference>
<reference key="2">
    <citation type="journal article" date="2009" name="PLoS Biol.">
        <title>Lineage-specific biology revealed by a finished genome assembly of the mouse.</title>
        <authorList>
            <person name="Church D.M."/>
            <person name="Goodstadt L."/>
            <person name="Hillier L.W."/>
            <person name="Zody M.C."/>
            <person name="Goldstein S."/>
            <person name="She X."/>
            <person name="Bult C.J."/>
            <person name="Agarwala R."/>
            <person name="Cherry J.L."/>
            <person name="DiCuccio M."/>
            <person name="Hlavina W."/>
            <person name="Kapustin Y."/>
            <person name="Meric P."/>
            <person name="Maglott D."/>
            <person name="Birtle Z."/>
            <person name="Marques A.C."/>
            <person name="Graves T."/>
            <person name="Zhou S."/>
            <person name="Teague B."/>
            <person name="Potamousis K."/>
            <person name="Churas C."/>
            <person name="Place M."/>
            <person name="Herschleb J."/>
            <person name="Runnheim R."/>
            <person name="Forrest D."/>
            <person name="Amos-Landgraf J."/>
            <person name="Schwartz D.C."/>
            <person name="Cheng Z."/>
            <person name="Lindblad-Toh K."/>
            <person name="Eichler E.E."/>
            <person name="Ponting C.P."/>
        </authorList>
    </citation>
    <scope>NUCLEOTIDE SEQUENCE [LARGE SCALE GENOMIC DNA]</scope>
    <source>
        <strain>C57BL/6J</strain>
    </source>
</reference>
<reference key="3">
    <citation type="journal article" date="2004" name="Genome Res.">
        <title>The status, quality, and expansion of the NIH full-length cDNA project: the Mammalian Gene Collection (MGC).</title>
        <authorList>
            <consortium name="The MGC Project Team"/>
        </authorList>
    </citation>
    <scope>NUCLEOTIDE SEQUENCE [LARGE SCALE MRNA] OF 2202-2924 (ISOFORM 1)</scope>
    <source>
        <strain>FVB/N</strain>
        <tissue>Liver</tissue>
        <tissue>Pancreas</tissue>
    </source>
</reference>
<reference key="4">
    <citation type="journal article" date="2005" name="Science">
        <title>The transcriptional landscape of the mammalian genome.</title>
        <authorList>
            <person name="Carninci P."/>
            <person name="Kasukawa T."/>
            <person name="Katayama S."/>
            <person name="Gough J."/>
            <person name="Frith M.C."/>
            <person name="Maeda N."/>
            <person name="Oyama R."/>
            <person name="Ravasi T."/>
            <person name="Lenhard B."/>
            <person name="Wells C."/>
            <person name="Kodzius R."/>
            <person name="Shimokawa K."/>
            <person name="Bajic V.B."/>
            <person name="Brenner S.E."/>
            <person name="Batalov S."/>
            <person name="Forrest A.R."/>
            <person name="Zavolan M."/>
            <person name="Davis M.J."/>
            <person name="Wilming L.G."/>
            <person name="Aidinis V."/>
            <person name="Allen J.E."/>
            <person name="Ambesi-Impiombato A."/>
            <person name="Apweiler R."/>
            <person name="Aturaliya R.N."/>
            <person name="Bailey T.L."/>
            <person name="Bansal M."/>
            <person name="Baxter L."/>
            <person name="Beisel K.W."/>
            <person name="Bersano T."/>
            <person name="Bono H."/>
            <person name="Chalk A.M."/>
            <person name="Chiu K.P."/>
            <person name="Choudhary V."/>
            <person name="Christoffels A."/>
            <person name="Clutterbuck D.R."/>
            <person name="Crowe M.L."/>
            <person name="Dalla E."/>
            <person name="Dalrymple B.P."/>
            <person name="de Bono B."/>
            <person name="Della Gatta G."/>
            <person name="di Bernardo D."/>
            <person name="Down T."/>
            <person name="Engstrom P."/>
            <person name="Fagiolini M."/>
            <person name="Faulkner G."/>
            <person name="Fletcher C.F."/>
            <person name="Fukushima T."/>
            <person name="Furuno M."/>
            <person name="Futaki S."/>
            <person name="Gariboldi M."/>
            <person name="Georgii-Hemming P."/>
            <person name="Gingeras T.R."/>
            <person name="Gojobori T."/>
            <person name="Green R.E."/>
            <person name="Gustincich S."/>
            <person name="Harbers M."/>
            <person name="Hayashi Y."/>
            <person name="Hensch T.K."/>
            <person name="Hirokawa N."/>
            <person name="Hill D."/>
            <person name="Huminiecki L."/>
            <person name="Iacono M."/>
            <person name="Ikeo K."/>
            <person name="Iwama A."/>
            <person name="Ishikawa T."/>
            <person name="Jakt M."/>
            <person name="Kanapin A."/>
            <person name="Katoh M."/>
            <person name="Kawasawa Y."/>
            <person name="Kelso J."/>
            <person name="Kitamura H."/>
            <person name="Kitano H."/>
            <person name="Kollias G."/>
            <person name="Krishnan S.P."/>
            <person name="Kruger A."/>
            <person name="Kummerfeld S.K."/>
            <person name="Kurochkin I.V."/>
            <person name="Lareau L.F."/>
            <person name="Lazarevic D."/>
            <person name="Lipovich L."/>
            <person name="Liu J."/>
            <person name="Liuni S."/>
            <person name="McWilliam S."/>
            <person name="Madan Babu M."/>
            <person name="Madera M."/>
            <person name="Marchionni L."/>
            <person name="Matsuda H."/>
            <person name="Matsuzawa S."/>
            <person name="Miki H."/>
            <person name="Mignone F."/>
            <person name="Miyake S."/>
            <person name="Morris K."/>
            <person name="Mottagui-Tabar S."/>
            <person name="Mulder N."/>
            <person name="Nakano N."/>
            <person name="Nakauchi H."/>
            <person name="Ng P."/>
            <person name="Nilsson R."/>
            <person name="Nishiguchi S."/>
            <person name="Nishikawa S."/>
            <person name="Nori F."/>
            <person name="Ohara O."/>
            <person name="Okazaki Y."/>
            <person name="Orlando V."/>
            <person name="Pang K.C."/>
            <person name="Pavan W.J."/>
            <person name="Pavesi G."/>
            <person name="Pesole G."/>
            <person name="Petrovsky N."/>
            <person name="Piazza S."/>
            <person name="Reed J."/>
            <person name="Reid J.F."/>
            <person name="Ring B.Z."/>
            <person name="Ringwald M."/>
            <person name="Rost B."/>
            <person name="Ruan Y."/>
            <person name="Salzberg S.L."/>
            <person name="Sandelin A."/>
            <person name="Schneider C."/>
            <person name="Schoenbach C."/>
            <person name="Sekiguchi K."/>
            <person name="Semple C.A."/>
            <person name="Seno S."/>
            <person name="Sessa L."/>
            <person name="Sheng Y."/>
            <person name="Shibata Y."/>
            <person name="Shimada H."/>
            <person name="Shimada K."/>
            <person name="Silva D."/>
            <person name="Sinclair B."/>
            <person name="Sperling S."/>
            <person name="Stupka E."/>
            <person name="Sugiura K."/>
            <person name="Sultana R."/>
            <person name="Takenaka Y."/>
            <person name="Taki K."/>
            <person name="Tammoja K."/>
            <person name="Tan S.L."/>
            <person name="Tang S."/>
            <person name="Taylor M.S."/>
            <person name="Tegner J."/>
            <person name="Teichmann S.A."/>
            <person name="Ueda H.R."/>
            <person name="van Nimwegen E."/>
            <person name="Verardo R."/>
            <person name="Wei C.L."/>
            <person name="Yagi K."/>
            <person name="Yamanishi H."/>
            <person name="Zabarovsky E."/>
            <person name="Zhu S."/>
            <person name="Zimmer A."/>
            <person name="Hide W."/>
            <person name="Bult C."/>
            <person name="Grimmond S.M."/>
            <person name="Teasdale R.D."/>
            <person name="Liu E.T."/>
            <person name="Brusic V."/>
            <person name="Quackenbush J."/>
            <person name="Wahlestedt C."/>
            <person name="Mattick J.S."/>
            <person name="Hume D.A."/>
            <person name="Kai C."/>
            <person name="Sasaki D."/>
            <person name="Tomaru Y."/>
            <person name="Fukuda S."/>
            <person name="Kanamori-Katayama M."/>
            <person name="Suzuki M."/>
            <person name="Aoki J."/>
            <person name="Arakawa T."/>
            <person name="Iida J."/>
            <person name="Imamura K."/>
            <person name="Itoh M."/>
            <person name="Kato T."/>
            <person name="Kawaji H."/>
            <person name="Kawagashira N."/>
            <person name="Kawashima T."/>
            <person name="Kojima M."/>
            <person name="Kondo S."/>
            <person name="Konno H."/>
            <person name="Nakano K."/>
            <person name="Ninomiya N."/>
            <person name="Nishio T."/>
            <person name="Okada M."/>
            <person name="Plessy C."/>
            <person name="Shibata K."/>
            <person name="Shiraki T."/>
            <person name="Suzuki S."/>
            <person name="Tagami M."/>
            <person name="Waki K."/>
            <person name="Watahiki A."/>
            <person name="Okamura-Oho Y."/>
            <person name="Suzuki H."/>
            <person name="Kawai J."/>
            <person name="Hayashizaki Y."/>
        </authorList>
    </citation>
    <scope>NUCLEOTIDE SEQUENCE [LARGE SCALE MRNA] OF 2642-2924 (ISOFORM 1)</scope>
    <source>
        <strain>C57BL/6J</strain>
        <tissue>Kidney</tissue>
    </source>
</reference>
<reference key="5">
    <citation type="journal article" date="2007" name="Proc. Natl. Acad. Sci. U.S.A.">
        <title>Large-scale phosphorylation analysis of mouse liver.</title>
        <authorList>
            <person name="Villen J."/>
            <person name="Beausoleil S.A."/>
            <person name="Gerber S.A."/>
            <person name="Gygi S.P."/>
        </authorList>
    </citation>
    <scope>IDENTIFICATION BY MASS SPECTROMETRY [LARGE SCALE ANALYSIS]</scope>
    <source>
        <tissue>Liver</tissue>
    </source>
</reference>
<reference key="6">
    <citation type="journal article" date="2009" name="Mol. Cell. Proteomics">
        <title>Large scale localization of protein phosphorylation by use of electron capture dissociation mass spectrometry.</title>
        <authorList>
            <person name="Sweet S.M."/>
            <person name="Bailey C.M."/>
            <person name="Cunningham D.L."/>
            <person name="Heath J.K."/>
            <person name="Cooper H.J."/>
        </authorList>
    </citation>
    <scope>PHOSPHORYLATION [LARGE SCALE ANALYSIS] AT SER-1538</scope>
    <scope>IDENTIFICATION BY MASS SPECTROMETRY [LARGE SCALE ANALYSIS]</scope>
    <source>
        <tissue>Embryonic fibroblast</tissue>
    </source>
</reference>
<reference key="7">
    <citation type="journal article" date="2010" name="Cell">
        <title>A tissue-specific atlas of mouse protein phosphorylation and expression.</title>
        <authorList>
            <person name="Huttlin E.L."/>
            <person name="Jedrychowski M.P."/>
            <person name="Elias J.E."/>
            <person name="Goswami T."/>
            <person name="Rad R."/>
            <person name="Beausoleil S.A."/>
            <person name="Villen J."/>
            <person name="Haas W."/>
            <person name="Sowa M.E."/>
            <person name="Gygi S.P."/>
        </authorList>
    </citation>
    <scope>PHOSPHORYLATION [LARGE SCALE ANALYSIS] AT SER-1488; SER-1515; THR-1519 AND SER-2407</scope>
    <scope>IDENTIFICATION BY MASS SPECTROMETRY [LARGE SCALE ANALYSIS]</scope>
    <source>
        <tissue>Brain</tissue>
        <tissue>Brown adipose tissue</tissue>
        <tissue>Heart</tissue>
        <tissue>Kidney</tissue>
        <tissue>Liver</tissue>
        <tissue>Lung</tissue>
        <tissue>Pancreas</tissue>
        <tissue>Spleen</tissue>
        <tissue>Testis</tissue>
    </source>
</reference>
<dbReference type="EMBL" id="AK129131">
    <property type="protein sequence ID" value="BAC97941.1"/>
    <property type="status" value="ALT_INIT"/>
    <property type="molecule type" value="mRNA"/>
</dbReference>
<dbReference type="EMBL" id="AL663082">
    <property type="status" value="NOT_ANNOTATED_CDS"/>
    <property type="molecule type" value="Genomic_DNA"/>
</dbReference>
<dbReference type="EMBL" id="BC037463">
    <property type="protein sequence ID" value="AAH37463.1"/>
    <property type="status" value="ALT_INIT"/>
    <property type="molecule type" value="mRNA"/>
</dbReference>
<dbReference type="EMBL" id="BC099976">
    <property type="protein sequence ID" value="AAH99976.1"/>
    <property type="status" value="ALT_INIT"/>
    <property type="molecule type" value="mRNA"/>
</dbReference>
<dbReference type="EMBL" id="AK052734">
    <property type="protein sequence ID" value="BAC35122.1"/>
    <property type="molecule type" value="mRNA"/>
</dbReference>
<dbReference type="CCDS" id="CCDS36218.1">
    <molecule id="Q5SSH7-2"/>
</dbReference>
<dbReference type="RefSeq" id="NP_001039001.1">
    <molecule id="Q5SSH7-2"/>
    <property type="nucleotide sequence ID" value="NM_001045536.2"/>
</dbReference>
<dbReference type="SMR" id="Q5SSH7"/>
<dbReference type="FunCoup" id="Q5SSH7">
    <property type="interactions" value="905"/>
</dbReference>
<dbReference type="IntAct" id="Q5SSH7">
    <property type="interactions" value="3"/>
</dbReference>
<dbReference type="STRING" id="10090.ENSMUSP00000068790"/>
<dbReference type="GlyGen" id="Q5SSH7">
    <property type="glycosylation" value="2 sites"/>
</dbReference>
<dbReference type="iPTMnet" id="Q5SSH7"/>
<dbReference type="PhosphoSitePlus" id="Q5SSH7"/>
<dbReference type="SwissPalm" id="Q5SSH7"/>
<dbReference type="jPOST" id="Q5SSH7"/>
<dbReference type="PaxDb" id="10090-ENSMUSP00000068790"/>
<dbReference type="PeptideAtlas" id="Q5SSH7"/>
<dbReference type="ProteomicsDB" id="275324">
    <molecule id="Q5SSH7-1"/>
</dbReference>
<dbReference type="ProteomicsDB" id="275325">
    <molecule id="Q5SSH7-2"/>
</dbReference>
<dbReference type="ProteomicsDB" id="275326">
    <molecule id="Q5SSH7-3"/>
</dbReference>
<dbReference type="Pumba" id="Q5SSH7"/>
<dbReference type="Antibodypedia" id="23205">
    <property type="antibodies" value="28 antibodies from 8 providers"/>
</dbReference>
<dbReference type="Ensembl" id="ENSMUST00000069395.7">
    <molecule id="Q5SSH7-2"/>
    <property type="protein sequence ID" value="ENSMUSP00000068790.6"/>
    <property type="gene ID" value="ENSMUSG00000055670.15"/>
</dbReference>
<dbReference type="GeneID" id="195018"/>
<dbReference type="KEGG" id="mmu:195018"/>
<dbReference type="UCSC" id="uc007jzl.2">
    <molecule id="Q5SSH7-2"/>
    <property type="organism name" value="mouse"/>
</dbReference>
<dbReference type="AGR" id="MGI:2444286"/>
<dbReference type="CTD" id="23140"/>
<dbReference type="MGI" id="MGI:2444286">
    <property type="gene designation" value="Zzef1"/>
</dbReference>
<dbReference type="VEuPathDB" id="HostDB:ENSMUSG00000055670"/>
<dbReference type="eggNOG" id="KOG1426">
    <property type="taxonomic scope" value="Eukaryota"/>
</dbReference>
<dbReference type="GeneTree" id="ENSGT00940000155045"/>
<dbReference type="InParanoid" id="Q5SSH7"/>
<dbReference type="OrthoDB" id="661148at2759"/>
<dbReference type="PhylomeDB" id="Q5SSH7"/>
<dbReference type="TreeFam" id="TF331572"/>
<dbReference type="BioGRID-ORCS" id="195018">
    <property type="hits" value="1 hit in 76 CRISPR screens"/>
</dbReference>
<dbReference type="ChiTaRS" id="Zzef1">
    <property type="organism name" value="mouse"/>
</dbReference>
<dbReference type="PRO" id="PR:Q5SSH7"/>
<dbReference type="Proteomes" id="UP000000589">
    <property type="component" value="Chromosome 11"/>
</dbReference>
<dbReference type="RNAct" id="Q5SSH7">
    <property type="molecule type" value="protein"/>
</dbReference>
<dbReference type="Bgee" id="ENSMUSG00000055670">
    <property type="expression patterns" value="Expressed in rostral migratory stream and 225 other cell types or tissues"/>
</dbReference>
<dbReference type="ExpressionAtlas" id="Q5SSH7">
    <property type="expression patterns" value="baseline and differential"/>
</dbReference>
<dbReference type="GO" id="GO:0009986">
    <property type="term" value="C:cell surface"/>
    <property type="evidence" value="ECO:0000314"/>
    <property type="project" value="MGI"/>
</dbReference>
<dbReference type="GO" id="GO:0098794">
    <property type="term" value="C:postsynapse"/>
    <property type="evidence" value="ECO:0000314"/>
    <property type="project" value="MGI"/>
</dbReference>
<dbReference type="GO" id="GO:0048786">
    <property type="term" value="C:presynaptic active zone"/>
    <property type="evidence" value="ECO:0000314"/>
    <property type="project" value="MGI"/>
</dbReference>
<dbReference type="GO" id="GO:0045202">
    <property type="term" value="C:synapse"/>
    <property type="evidence" value="ECO:0000314"/>
    <property type="project" value="MGI"/>
</dbReference>
<dbReference type="GO" id="GO:0005509">
    <property type="term" value="F:calcium ion binding"/>
    <property type="evidence" value="ECO:0007669"/>
    <property type="project" value="InterPro"/>
</dbReference>
<dbReference type="GO" id="GO:0042393">
    <property type="term" value="F:histone binding"/>
    <property type="evidence" value="ECO:0000250"/>
    <property type="project" value="UniProtKB"/>
</dbReference>
<dbReference type="GO" id="GO:0061659">
    <property type="term" value="F:ubiquitin-like protein ligase activity"/>
    <property type="evidence" value="ECO:0000315"/>
    <property type="project" value="MGI"/>
</dbReference>
<dbReference type="GO" id="GO:0008270">
    <property type="term" value="F:zinc ion binding"/>
    <property type="evidence" value="ECO:0007669"/>
    <property type="project" value="UniProtKB-KW"/>
</dbReference>
<dbReference type="GO" id="GO:0007405">
    <property type="term" value="P:neuroblast proliferation"/>
    <property type="evidence" value="ECO:0000315"/>
    <property type="project" value="MGI"/>
</dbReference>
<dbReference type="GO" id="GO:0016567">
    <property type="term" value="P:protein ubiquitination"/>
    <property type="evidence" value="ECO:0000315"/>
    <property type="project" value="MGI"/>
</dbReference>
<dbReference type="GO" id="GO:0048167">
    <property type="term" value="P:regulation of synaptic plasticity"/>
    <property type="evidence" value="ECO:0000315"/>
    <property type="project" value="MGI"/>
</dbReference>
<dbReference type="GO" id="GO:0035249">
    <property type="term" value="P:synaptic transmission, glutamatergic"/>
    <property type="evidence" value="ECO:0000315"/>
    <property type="project" value="MGI"/>
</dbReference>
<dbReference type="GO" id="GO:0008542">
    <property type="term" value="P:visual learning"/>
    <property type="evidence" value="ECO:0000315"/>
    <property type="project" value="MGI"/>
</dbReference>
<dbReference type="CDD" id="cd08667">
    <property type="entry name" value="APC10-ZZEF1"/>
    <property type="match status" value="1"/>
</dbReference>
<dbReference type="CDD" id="cd02249">
    <property type="entry name" value="ZZ"/>
    <property type="match status" value="1"/>
</dbReference>
<dbReference type="CDD" id="cd02343">
    <property type="entry name" value="ZZ_EF"/>
    <property type="match status" value="1"/>
</dbReference>
<dbReference type="Gene3D" id="3.30.60.90">
    <property type="match status" value="2"/>
</dbReference>
<dbReference type="Gene3D" id="1.10.238.10">
    <property type="entry name" value="EF-hand"/>
    <property type="match status" value="1"/>
</dbReference>
<dbReference type="Gene3D" id="2.60.120.260">
    <property type="entry name" value="Galactose-binding domain-like"/>
    <property type="match status" value="1"/>
</dbReference>
<dbReference type="InterPro" id="IPR004939">
    <property type="entry name" value="APC_su10/DOC_dom"/>
</dbReference>
<dbReference type="InterPro" id="IPR011992">
    <property type="entry name" value="EF-hand-dom_pair"/>
</dbReference>
<dbReference type="InterPro" id="IPR002048">
    <property type="entry name" value="EF_hand_dom"/>
</dbReference>
<dbReference type="InterPro" id="IPR008979">
    <property type="entry name" value="Galactose-bd-like_sf"/>
</dbReference>
<dbReference type="InterPro" id="IPR000433">
    <property type="entry name" value="Znf_ZZ"/>
</dbReference>
<dbReference type="InterPro" id="IPR043145">
    <property type="entry name" value="Znf_ZZ_sf"/>
</dbReference>
<dbReference type="InterPro" id="IPR040099">
    <property type="entry name" value="ZZEF1"/>
</dbReference>
<dbReference type="InterPro" id="IPR047052">
    <property type="entry name" value="ZZEF1_APC10"/>
</dbReference>
<dbReference type="InterPro" id="IPR041986">
    <property type="entry name" value="ZZEF1_ZZ"/>
</dbReference>
<dbReference type="PANTHER" id="PTHR22772">
    <property type="entry name" value="NOVEL ZZ TYPE ZINC FINGER DOMAIN CONTAINING PROTEIN"/>
    <property type="match status" value="1"/>
</dbReference>
<dbReference type="PANTHER" id="PTHR22772:SF4">
    <property type="entry name" value="ZINC FINGER ZZ-TYPE AND EF-HAND DOMAIN-CONTAINING PROTEIN 1"/>
    <property type="match status" value="1"/>
</dbReference>
<dbReference type="Pfam" id="PF03256">
    <property type="entry name" value="ANAPC10"/>
    <property type="match status" value="1"/>
</dbReference>
<dbReference type="Pfam" id="PF00569">
    <property type="entry name" value="ZZ"/>
    <property type="match status" value="2"/>
</dbReference>
<dbReference type="SMART" id="SM01337">
    <property type="entry name" value="APC10"/>
    <property type="match status" value="1"/>
</dbReference>
<dbReference type="SMART" id="SM00054">
    <property type="entry name" value="EFh"/>
    <property type="match status" value="1"/>
</dbReference>
<dbReference type="SMART" id="SM00291">
    <property type="entry name" value="ZnF_ZZ"/>
    <property type="match status" value="2"/>
</dbReference>
<dbReference type="SUPFAM" id="SSF47473">
    <property type="entry name" value="EF-hand"/>
    <property type="match status" value="1"/>
</dbReference>
<dbReference type="SUPFAM" id="SSF49785">
    <property type="entry name" value="Galactose-binding domain-like"/>
    <property type="match status" value="1"/>
</dbReference>
<dbReference type="SUPFAM" id="SSF57850">
    <property type="entry name" value="RING/U-box"/>
    <property type="match status" value="2"/>
</dbReference>
<dbReference type="PROSITE" id="PS51284">
    <property type="entry name" value="DOC"/>
    <property type="match status" value="1"/>
</dbReference>
<dbReference type="PROSITE" id="PS50222">
    <property type="entry name" value="EF_HAND_2"/>
    <property type="match status" value="1"/>
</dbReference>
<dbReference type="PROSITE" id="PS01357">
    <property type="entry name" value="ZF_ZZ_1"/>
    <property type="match status" value="1"/>
</dbReference>
<dbReference type="PROSITE" id="PS50135">
    <property type="entry name" value="ZF_ZZ_2"/>
    <property type="match status" value="2"/>
</dbReference>
<keyword id="KW-0007">Acetylation</keyword>
<keyword id="KW-0010">Activator</keyword>
<keyword id="KW-0025">Alternative splicing</keyword>
<keyword id="KW-0449">Lipoprotein</keyword>
<keyword id="KW-0479">Metal-binding</keyword>
<keyword id="KW-0519">Myristate</keyword>
<keyword id="KW-0597">Phosphoprotein</keyword>
<keyword id="KW-1185">Reference proteome</keyword>
<keyword id="KW-0677">Repeat</keyword>
<keyword id="KW-0804">Transcription</keyword>
<keyword id="KW-0805">Transcription regulation</keyword>
<keyword id="KW-0862">Zinc</keyword>
<keyword id="KW-0863">Zinc-finger</keyword>
<accession>Q5SSH7</accession>
<accession>Q499C8</accession>
<accession>Q6ZQC5</accession>
<accession>Q8C710</accession>
<accession>Q8CI54</accession>